<accession>A7ZJW9</accession>
<proteinExistence type="inferred from homology"/>
<protein>
    <recommendedName>
        <fullName evidence="1">Uncharacterized MFS-type transporter YcaD</fullName>
    </recommendedName>
</protein>
<keyword id="KW-0997">Cell inner membrane</keyword>
<keyword id="KW-1003">Cell membrane</keyword>
<keyword id="KW-0472">Membrane</keyword>
<keyword id="KW-1185">Reference proteome</keyword>
<keyword id="KW-0812">Transmembrane</keyword>
<keyword id="KW-1133">Transmembrane helix</keyword>
<keyword id="KW-0813">Transport</keyword>
<feature type="chain" id="PRO_1000065488" description="Uncharacterized MFS-type transporter YcaD">
    <location>
        <begin position="1"/>
        <end position="382"/>
    </location>
</feature>
<feature type="transmembrane region" description="Helical" evidence="1">
    <location>
        <begin position="14"/>
        <end position="34"/>
    </location>
</feature>
<feature type="transmembrane region" description="Helical" evidence="1">
    <location>
        <begin position="45"/>
        <end position="65"/>
    </location>
</feature>
<feature type="transmembrane region" description="Helical" evidence="1">
    <location>
        <begin position="79"/>
        <end position="99"/>
    </location>
</feature>
<feature type="transmembrane region" description="Helical" evidence="1">
    <location>
        <begin position="102"/>
        <end position="122"/>
    </location>
</feature>
<feature type="transmembrane region" description="Helical" evidence="1">
    <location>
        <begin position="131"/>
        <end position="151"/>
    </location>
</feature>
<feature type="transmembrane region" description="Helical" evidence="1">
    <location>
        <begin position="157"/>
        <end position="177"/>
    </location>
</feature>
<feature type="transmembrane region" description="Helical" evidence="1">
    <location>
        <begin position="204"/>
        <end position="224"/>
    </location>
</feature>
<feature type="transmembrane region" description="Helical" evidence="1">
    <location>
        <begin position="235"/>
        <end position="255"/>
    </location>
</feature>
<feature type="transmembrane region" description="Helical" evidence="1">
    <location>
        <begin position="270"/>
        <end position="290"/>
    </location>
</feature>
<feature type="transmembrane region" description="Helical" evidence="1">
    <location>
        <begin position="291"/>
        <end position="311"/>
    </location>
</feature>
<feature type="transmembrane region" description="Helical" evidence="1">
    <location>
        <begin position="325"/>
        <end position="345"/>
    </location>
</feature>
<feature type="transmembrane region" description="Helical" evidence="1">
    <location>
        <begin position="348"/>
        <end position="368"/>
    </location>
</feature>
<evidence type="ECO:0000255" key="1">
    <source>
        <dbReference type="HAMAP-Rule" id="MF_01149"/>
    </source>
</evidence>
<dbReference type="EMBL" id="CP000800">
    <property type="protein sequence ID" value="ABV20708.1"/>
    <property type="molecule type" value="Genomic_DNA"/>
</dbReference>
<dbReference type="RefSeq" id="WP_000109289.1">
    <property type="nucleotide sequence ID" value="NC_009801.1"/>
</dbReference>
<dbReference type="SMR" id="A7ZJW9"/>
<dbReference type="KEGG" id="ecw:EcE24377A_0975"/>
<dbReference type="HOGENOM" id="CLU_035018_1_2_6"/>
<dbReference type="Proteomes" id="UP000001122">
    <property type="component" value="Chromosome"/>
</dbReference>
<dbReference type="GO" id="GO:0005886">
    <property type="term" value="C:plasma membrane"/>
    <property type="evidence" value="ECO:0007669"/>
    <property type="project" value="UniProtKB-SubCell"/>
</dbReference>
<dbReference type="GO" id="GO:0022857">
    <property type="term" value="F:transmembrane transporter activity"/>
    <property type="evidence" value="ECO:0007669"/>
    <property type="project" value="UniProtKB-UniRule"/>
</dbReference>
<dbReference type="CDD" id="cd17477">
    <property type="entry name" value="MFS_YcaD_like"/>
    <property type="match status" value="1"/>
</dbReference>
<dbReference type="FunFam" id="1.20.1250.20:FF:000041">
    <property type="entry name" value="Uncharacterized MFS-type transporter YcaD"/>
    <property type="match status" value="1"/>
</dbReference>
<dbReference type="FunFam" id="1.20.1250.20:FF:000066">
    <property type="entry name" value="Uncharacterized MFS-type transporter YcaD"/>
    <property type="match status" value="1"/>
</dbReference>
<dbReference type="Gene3D" id="1.20.1250.20">
    <property type="entry name" value="MFS general substrate transporter like domains"/>
    <property type="match status" value="2"/>
</dbReference>
<dbReference type="HAMAP" id="MF_01149">
    <property type="entry name" value="MFS_YcaD"/>
    <property type="match status" value="1"/>
</dbReference>
<dbReference type="InterPro" id="IPR011701">
    <property type="entry name" value="MFS"/>
</dbReference>
<dbReference type="InterPro" id="IPR020846">
    <property type="entry name" value="MFS_dom"/>
</dbReference>
<dbReference type="InterPro" id="IPR036259">
    <property type="entry name" value="MFS_trans_sf"/>
</dbReference>
<dbReference type="InterPro" id="IPR023745">
    <property type="entry name" value="MFS_YcaD"/>
</dbReference>
<dbReference type="InterPro" id="IPR047200">
    <property type="entry name" value="MFS_YcaD-like"/>
</dbReference>
<dbReference type="NCBIfam" id="NF002962">
    <property type="entry name" value="PRK03633.1"/>
    <property type="match status" value="1"/>
</dbReference>
<dbReference type="PANTHER" id="PTHR23521">
    <property type="entry name" value="TRANSPORTER MFS SUPERFAMILY"/>
    <property type="match status" value="1"/>
</dbReference>
<dbReference type="PANTHER" id="PTHR23521:SF2">
    <property type="entry name" value="TRANSPORTER MFS SUPERFAMILY"/>
    <property type="match status" value="1"/>
</dbReference>
<dbReference type="Pfam" id="PF07690">
    <property type="entry name" value="MFS_1"/>
    <property type="match status" value="1"/>
</dbReference>
<dbReference type="SUPFAM" id="SSF103473">
    <property type="entry name" value="MFS general substrate transporter"/>
    <property type="match status" value="1"/>
</dbReference>
<dbReference type="PROSITE" id="PS50850">
    <property type="entry name" value="MFS"/>
    <property type="match status" value="1"/>
</dbReference>
<organism>
    <name type="scientific">Escherichia coli O139:H28 (strain E24377A / ETEC)</name>
    <dbReference type="NCBI Taxonomy" id="331111"/>
    <lineage>
        <taxon>Bacteria</taxon>
        <taxon>Pseudomonadati</taxon>
        <taxon>Pseudomonadota</taxon>
        <taxon>Gammaproteobacteria</taxon>
        <taxon>Enterobacterales</taxon>
        <taxon>Enterobacteriaceae</taxon>
        <taxon>Escherichia</taxon>
    </lineage>
</organism>
<name>YCAD_ECO24</name>
<gene>
    <name evidence="1" type="primary">ycaD</name>
    <name type="ordered locus">EcE24377A_0975</name>
</gene>
<reference key="1">
    <citation type="journal article" date="2008" name="J. Bacteriol.">
        <title>The pangenome structure of Escherichia coli: comparative genomic analysis of E. coli commensal and pathogenic isolates.</title>
        <authorList>
            <person name="Rasko D.A."/>
            <person name="Rosovitz M.J."/>
            <person name="Myers G.S.A."/>
            <person name="Mongodin E.F."/>
            <person name="Fricke W.F."/>
            <person name="Gajer P."/>
            <person name="Crabtree J."/>
            <person name="Sebaihia M."/>
            <person name="Thomson N.R."/>
            <person name="Chaudhuri R."/>
            <person name="Henderson I.R."/>
            <person name="Sperandio V."/>
            <person name="Ravel J."/>
        </authorList>
    </citation>
    <scope>NUCLEOTIDE SEQUENCE [LARGE SCALE GENOMIC DNA]</scope>
    <source>
        <strain>E24377A / ETEC</strain>
    </source>
</reference>
<comment type="subcellular location">
    <subcellularLocation>
        <location evidence="1">Cell inner membrane</location>
        <topology evidence="1">Multi-pass membrane protein</topology>
    </subcellularLocation>
</comment>
<comment type="similarity">
    <text evidence="1">Belongs to the major facilitator superfamily. YcaD (TC 2.A.1.26) family.</text>
</comment>
<sequence length="382" mass="41444">MSTYTRPVMLLLSGLLLLTLAIAVLNTLVPLWLAQEHMSTWQVGVVSSSYFTGNLVGTLLTGYVIKRIGFNRSYYLASFIFAAGCAGLGLMIGFWSWLAWRFVAGVGCAMIWVVVESALMCSGTSRNRGRLLAAYMMVYYVGTFLGQLLVSKVSTELMSVLPWVTGLTLAGILPLLFTRVLNQQAENHDSTSITAMLKLRQARLGVNGCIISGIVLGSLYGLMPLYLNHKGVSNASIGFWMAVLVSAGILGQWPIGRLADKFGRLLVLRVQVFVVILGSIAMLSQAAMAPALFILGAAGFTLYPVAMAWACEKVEHHQLVAMNQALLLSYTVGSLLGPSFTAMLMQNFSDNLLFIMIASVSFIYLLMLLRNAGHTPKPVAHV</sequence>